<accession>Q5SJR1</accession>
<reference key="1">
    <citation type="submission" date="2004-11" db="EMBL/GenBank/DDBJ databases">
        <title>Complete genome sequence of Thermus thermophilus HB8.</title>
        <authorList>
            <person name="Masui R."/>
            <person name="Kurokawa K."/>
            <person name="Nakagawa N."/>
            <person name="Tokunaga F."/>
            <person name="Koyama Y."/>
            <person name="Shibata T."/>
            <person name="Oshima T."/>
            <person name="Yokoyama S."/>
            <person name="Yasunaga T."/>
            <person name="Kuramitsu S."/>
        </authorList>
    </citation>
    <scope>NUCLEOTIDE SEQUENCE [LARGE SCALE GENOMIC DNA]</scope>
    <source>
        <strain>ATCC 27634 / DSM 579 / HB8</strain>
    </source>
</reference>
<reference key="2">
    <citation type="submission" date="2005-03" db="PDB data bank">
        <title>Crystal structure of tt0473, putative triosephosphate isomerase from Thermus thermophilus HB8.</title>
        <authorList>
            <consortium name="RIKEN structural genomics initiative (RSGI)"/>
        </authorList>
    </citation>
    <scope>X-RAY CRYSTALLOGRAPHY (1.6 ANGSTROMS)</scope>
    <scope>SUBUNIT</scope>
</reference>
<sequence length="250" mass="27095">MRRVLVAGNWKMHKTPSEARVWFAELKRLLPPLQSEAAVLPAFPILPVAKEVLAETQVGYGAQDVSAHKEGAYTGEVSARMLSDLGCRYAIVGHSERRRYHGETDALVAEKAKRLLEEGITPILCVGEPLEVREKGEAVPYTLRQLRGSLEGVEPPGPEALVIAYEPVWAIGTGKNATPEDAEAMHQAIRKALSERYGEAFASRVRILYGGSVNPKNFADLLSMPNVDGGLVGGASLELESFLALLRIAG</sequence>
<feature type="chain" id="PRO_0000307417" description="Triosephosphate isomerase">
    <location>
        <begin position="1"/>
        <end position="250"/>
    </location>
</feature>
<feature type="active site" description="Electrophile" evidence="1">
    <location>
        <position position="94"/>
    </location>
</feature>
<feature type="active site" description="Proton acceptor" evidence="1">
    <location>
        <position position="166"/>
    </location>
</feature>
<feature type="binding site" evidence="1">
    <location>
        <begin position="9"/>
        <end position="11"/>
    </location>
    <ligand>
        <name>substrate</name>
    </ligand>
</feature>
<feature type="binding site" evidence="1">
    <location>
        <position position="172"/>
    </location>
    <ligand>
        <name>substrate</name>
    </ligand>
</feature>
<feature type="binding site" evidence="1">
    <location>
        <position position="212"/>
    </location>
    <ligand>
        <name>substrate</name>
    </ligand>
</feature>
<feature type="binding site" evidence="1">
    <location>
        <begin position="233"/>
        <end position="234"/>
    </location>
    <ligand>
        <name>substrate</name>
    </ligand>
</feature>
<feature type="strand" evidence="3">
    <location>
        <begin position="5"/>
        <end position="9"/>
    </location>
</feature>
<feature type="helix" evidence="3">
    <location>
        <begin position="16"/>
        <end position="29"/>
    </location>
</feature>
<feature type="strand" evidence="3">
    <location>
        <begin position="34"/>
        <end position="40"/>
    </location>
</feature>
<feature type="helix" evidence="3">
    <location>
        <begin position="43"/>
        <end position="45"/>
    </location>
</feature>
<feature type="helix" evidence="3">
    <location>
        <begin position="46"/>
        <end position="53"/>
    </location>
</feature>
<feature type="strand" evidence="3">
    <location>
        <begin position="59"/>
        <end position="63"/>
    </location>
</feature>
<feature type="strand" evidence="3">
    <location>
        <begin position="67"/>
        <end position="72"/>
    </location>
</feature>
<feature type="helix" evidence="3">
    <location>
        <begin position="79"/>
        <end position="84"/>
    </location>
</feature>
<feature type="strand" evidence="3">
    <location>
        <begin position="88"/>
        <end position="93"/>
    </location>
</feature>
<feature type="helix" evidence="3">
    <location>
        <begin position="95"/>
        <end position="100"/>
    </location>
</feature>
<feature type="helix" evidence="3">
    <location>
        <begin position="105"/>
        <end position="117"/>
    </location>
</feature>
<feature type="strand" evidence="3">
    <location>
        <begin position="121"/>
        <end position="126"/>
    </location>
</feature>
<feature type="helix" evidence="3">
    <location>
        <begin position="130"/>
        <end position="134"/>
    </location>
</feature>
<feature type="helix" evidence="3">
    <location>
        <begin position="138"/>
        <end position="149"/>
    </location>
</feature>
<feature type="turn" evidence="3">
    <location>
        <begin position="150"/>
        <end position="152"/>
    </location>
</feature>
<feature type="helix" evidence="3">
    <location>
        <begin position="158"/>
        <end position="160"/>
    </location>
</feature>
<feature type="strand" evidence="3">
    <location>
        <begin position="162"/>
        <end position="165"/>
    </location>
</feature>
<feature type="helix" evidence="3">
    <location>
        <begin position="168"/>
        <end position="170"/>
    </location>
</feature>
<feature type="strand" evidence="3">
    <location>
        <begin position="171"/>
        <end position="174"/>
    </location>
</feature>
<feature type="helix" evidence="3">
    <location>
        <begin position="179"/>
        <end position="197"/>
    </location>
</feature>
<feature type="helix" evidence="3">
    <location>
        <begin position="199"/>
        <end position="202"/>
    </location>
</feature>
<feature type="strand" evidence="3">
    <location>
        <begin position="206"/>
        <end position="212"/>
    </location>
</feature>
<feature type="turn" evidence="3">
    <location>
        <begin position="215"/>
        <end position="217"/>
    </location>
</feature>
<feature type="helix" evidence="3">
    <location>
        <begin position="218"/>
        <end position="222"/>
    </location>
</feature>
<feature type="strand" evidence="3">
    <location>
        <begin position="229"/>
        <end position="233"/>
    </location>
</feature>
<feature type="helix" evidence="3">
    <location>
        <begin position="234"/>
        <end position="236"/>
    </location>
</feature>
<feature type="helix" evidence="3">
    <location>
        <begin position="239"/>
        <end position="249"/>
    </location>
</feature>
<evidence type="ECO:0000255" key="1">
    <source>
        <dbReference type="HAMAP-Rule" id="MF_00147"/>
    </source>
</evidence>
<evidence type="ECO:0000269" key="2">
    <source ref="2"/>
</evidence>
<evidence type="ECO:0007829" key="3">
    <source>
        <dbReference type="PDB" id="1YYA"/>
    </source>
</evidence>
<proteinExistence type="evidence at protein level"/>
<comment type="function">
    <text evidence="1">Involved in the gluconeogenesis. Catalyzes stereospecifically the conversion of dihydroxyacetone phosphate (DHAP) to D-glyceraldehyde-3-phosphate (G3P).</text>
</comment>
<comment type="catalytic activity">
    <reaction evidence="1">
        <text>D-glyceraldehyde 3-phosphate = dihydroxyacetone phosphate</text>
        <dbReference type="Rhea" id="RHEA:18585"/>
        <dbReference type="ChEBI" id="CHEBI:57642"/>
        <dbReference type="ChEBI" id="CHEBI:59776"/>
        <dbReference type="EC" id="5.3.1.1"/>
    </reaction>
</comment>
<comment type="pathway">
    <text evidence="1">Carbohydrate biosynthesis; gluconeogenesis.</text>
</comment>
<comment type="pathway">
    <text evidence="1">Carbohydrate degradation; glycolysis; D-glyceraldehyde 3-phosphate from glycerone phosphate: step 1/1.</text>
</comment>
<comment type="subunit">
    <text evidence="1 2">Homodimer.</text>
</comment>
<comment type="subcellular location">
    <subcellularLocation>
        <location evidence="1">Cytoplasm</location>
    </subcellularLocation>
</comment>
<comment type="similarity">
    <text evidence="1">Belongs to the triosephosphate isomerase family.</text>
</comment>
<name>TPIS_THET8</name>
<protein>
    <recommendedName>
        <fullName evidence="1">Triosephosphate isomerase</fullName>
        <shortName evidence="1">TIM</shortName>
        <shortName evidence="1">TPI</shortName>
        <ecNumber evidence="1">5.3.1.1</ecNumber>
    </recommendedName>
    <alternativeName>
        <fullName evidence="1">Triose-phosphate isomerase</fullName>
    </alternativeName>
</protein>
<keyword id="KW-0002">3D-structure</keyword>
<keyword id="KW-0963">Cytoplasm</keyword>
<keyword id="KW-0312">Gluconeogenesis</keyword>
<keyword id="KW-0324">Glycolysis</keyword>
<keyword id="KW-0413">Isomerase</keyword>
<keyword id="KW-1185">Reference proteome</keyword>
<dbReference type="EC" id="5.3.1.1" evidence="1"/>
<dbReference type="EMBL" id="AP008226">
    <property type="protein sequence ID" value="BAD70770.1"/>
    <property type="molecule type" value="Genomic_DNA"/>
</dbReference>
<dbReference type="RefSeq" id="WP_011228317.1">
    <property type="nucleotide sequence ID" value="NC_006461.1"/>
</dbReference>
<dbReference type="RefSeq" id="YP_144213.1">
    <property type="nucleotide sequence ID" value="NC_006461.1"/>
</dbReference>
<dbReference type="PDB" id="1YYA">
    <property type="method" value="X-ray"/>
    <property type="resolution" value="1.60 A"/>
    <property type="chains" value="A/B=1-250"/>
</dbReference>
<dbReference type="PDBsum" id="1YYA"/>
<dbReference type="SMR" id="Q5SJR1"/>
<dbReference type="EnsemblBacteria" id="BAD70770">
    <property type="protein sequence ID" value="BAD70770"/>
    <property type="gene ID" value="BAD70770"/>
</dbReference>
<dbReference type="GeneID" id="3169211"/>
<dbReference type="KEGG" id="ttj:TTHA0947"/>
<dbReference type="PATRIC" id="fig|300852.9.peg.929"/>
<dbReference type="eggNOG" id="COG0149">
    <property type="taxonomic scope" value="Bacteria"/>
</dbReference>
<dbReference type="HOGENOM" id="CLU_024251_2_1_0"/>
<dbReference type="PhylomeDB" id="Q5SJR1"/>
<dbReference type="UniPathway" id="UPA00109">
    <property type="reaction ID" value="UER00189"/>
</dbReference>
<dbReference type="UniPathway" id="UPA00138"/>
<dbReference type="EvolutionaryTrace" id="Q5SJR1"/>
<dbReference type="Proteomes" id="UP000000532">
    <property type="component" value="Chromosome"/>
</dbReference>
<dbReference type="GO" id="GO:0005829">
    <property type="term" value="C:cytosol"/>
    <property type="evidence" value="ECO:0007669"/>
    <property type="project" value="TreeGrafter"/>
</dbReference>
<dbReference type="GO" id="GO:0004807">
    <property type="term" value="F:triose-phosphate isomerase activity"/>
    <property type="evidence" value="ECO:0007669"/>
    <property type="project" value="UniProtKB-UniRule"/>
</dbReference>
<dbReference type="GO" id="GO:0006094">
    <property type="term" value="P:gluconeogenesis"/>
    <property type="evidence" value="ECO:0007669"/>
    <property type="project" value="UniProtKB-UniRule"/>
</dbReference>
<dbReference type="GO" id="GO:0046166">
    <property type="term" value="P:glyceraldehyde-3-phosphate biosynthetic process"/>
    <property type="evidence" value="ECO:0007669"/>
    <property type="project" value="TreeGrafter"/>
</dbReference>
<dbReference type="GO" id="GO:0019563">
    <property type="term" value="P:glycerol catabolic process"/>
    <property type="evidence" value="ECO:0007669"/>
    <property type="project" value="TreeGrafter"/>
</dbReference>
<dbReference type="GO" id="GO:0006096">
    <property type="term" value="P:glycolytic process"/>
    <property type="evidence" value="ECO:0007669"/>
    <property type="project" value="UniProtKB-UniRule"/>
</dbReference>
<dbReference type="CDD" id="cd00311">
    <property type="entry name" value="TIM"/>
    <property type="match status" value="1"/>
</dbReference>
<dbReference type="FunFam" id="3.20.20.70:FF:000016">
    <property type="entry name" value="Triosephosphate isomerase"/>
    <property type="match status" value="1"/>
</dbReference>
<dbReference type="Gene3D" id="3.20.20.70">
    <property type="entry name" value="Aldolase class I"/>
    <property type="match status" value="1"/>
</dbReference>
<dbReference type="HAMAP" id="MF_00147_B">
    <property type="entry name" value="TIM_B"/>
    <property type="match status" value="1"/>
</dbReference>
<dbReference type="InterPro" id="IPR013785">
    <property type="entry name" value="Aldolase_TIM"/>
</dbReference>
<dbReference type="InterPro" id="IPR035990">
    <property type="entry name" value="TIM_sf"/>
</dbReference>
<dbReference type="InterPro" id="IPR022896">
    <property type="entry name" value="TrioseP_Isoase_bac/euk"/>
</dbReference>
<dbReference type="InterPro" id="IPR000652">
    <property type="entry name" value="Triosephosphate_isomerase"/>
</dbReference>
<dbReference type="InterPro" id="IPR020861">
    <property type="entry name" value="Triosephosphate_isomerase_AS"/>
</dbReference>
<dbReference type="NCBIfam" id="TIGR00419">
    <property type="entry name" value="tim"/>
    <property type="match status" value="1"/>
</dbReference>
<dbReference type="PANTHER" id="PTHR21139">
    <property type="entry name" value="TRIOSEPHOSPHATE ISOMERASE"/>
    <property type="match status" value="1"/>
</dbReference>
<dbReference type="PANTHER" id="PTHR21139:SF42">
    <property type="entry name" value="TRIOSEPHOSPHATE ISOMERASE"/>
    <property type="match status" value="1"/>
</dbReference>
<dbReference type="Pfam" id="PF00121">
    <property type="entry name" value="TIM"/>
    <property type="match status" value="1"/>
</dbReference>
<dbReference type="SUPFAM" id="SSF51351">
    <property type="entry name" value="Triosephosphate isomerase (TIM)"/>
    <property type="match status" value="1"/>
</dbReference>
<dbReference type="PROSITE" id="PS00171">
    <property type="entry name" value="TIM_1"/>
    <property type="match status" value="1"/>
</dbReference>
<dbReference type="PROSITE" id="PS51440">
    <property type="entry name" value="TIM_2"/>
    <property type="match status" value="1"/>
</dbReference>
<organism>
    <name type="scientific">Thermus thermophilus (strain ATCC 27634 / DSM 579 / HB8)</name>
    <dbReference type="NCBI Taxonomy" id="300852"/>
    <lineage>
        <taxon>Bacteria</taxon>
        <taxon>Thermotogati</taxon>
        <taxon>Deinococcota</taxon>
        <taxon>Deinococci</taxon>
        <taxon>Thermales</taxon>
        <taxon>Thermaceae</taxon>
        <taxon>Thermus</taxon>
    </lineage>
</organism>
<gene>
    <name evidence="1" type="primary">tpiA</name>
    <name type="ordered locus">TTHA0947</name>
</gene>